<evidence type="ECO:0000255" key="1">
    <source>
        <dbReference type="HAMAP-Rule" id="MF_00454"/>
    </source>
</evidence>
<accession>B2UAT6</accession>
<protein>
    <recommendedName>
        <fullName evidence="1">Fluoride-specific ion channel FluC</fullName>
    </recommendedName>
</protein>
<dbReference type="EMBL" id="CP001068">
    <property type="protein sequence ID" value="ACD26352.1"/>
    <property type="molecule type" value="Genomic_DNA"/>
</dbReference>
<dbReference type="SMR" id="B2UAT6"/>
<dbReference type="STRING" id="402626.Rpic_1208"/>
<dbReference type="KEGG" id="rpi:Rpic_1208"/>
<dbReference type="PATRIC" id="fig|402626.5.peg.2409"/>
<dbReference type="eggNOG" id="COG0239">
    <property type="taxonomic scope" value="Bacteria"/>
</dbReference>
<dbReference type="HOGENOM" id="CLU_114342_3_3_4"/>
<dbReference type="GO" id="GO:0005886">
    <property type="term" value="C:plasma membrane"/>
    <property type="evidence" value="ECO:0007669"/>
    <property type="project" value="UniProtKB-SubCell"/>
</dbReference>
<dbReference type="GO" id="GO:0062054">
    <property type="term" value="F:fluoride channel activity"/>
    <property type="evidence" value="ECO:0007669"/>
    <property type="project" value="UniProtKB-UniRule"/>
</dbReference>
<dbReference type="GO" id="GO:0046872">
    <property type="term" value="F:metal ion binding"/>
    <property type="evidence" value="ECO:0007669"/>
    <property type="project" value="UniProtKB-KW"/>
</dbReference>
<dbReference type="GO" id="GO:0140114">
    <property type="term" value="P:cellular detoxification of fluoride"/>
    <property type="evidence" value="ECO:0007669"/>
    <property type="project" value="UniProtKB-UniRule"/>
</dbReference>
<dbReference type="HAMAP" id="MF_00454">
    <property type="entry name" value="FluC"/>
    <property type="match status" value="1"/>
</dbReference>
<dbReference type="InterPro" id="IPR003691">
    <property type="entry name" value="FluC"/>
</dbReference>
<dbReference type="NCBIfam" id="TIGR00494">
    <property type="entry name" value="crcB"/>
    <property type="match status" value="1"/>
</dbReference>
<dbReference type="NCBIfam" id="NF010792">
    <property type="entry name" value="PRK14196.1"/>
    <property type="match status" value="1"/>
</dbReference>
<dbReference type="PANTHER" id="PTHR28259">
    <property type="entry name" value="FLUORIDE EXPORT PROTEIN 1-RELATED"/>
    <property type="match status" value="1"/>
</dbReference>
<dbReference type="PANTHER" id="PTHR28259:SF1">
    <property type="entry name" value="FLUORIDE EXPORT PROTEIN 1-RELATED"/>
    <property type="match status" value="1"/>
</dbReference>
<dbReference type="Pfam" id="PF02537">
    <property type="entry name" value="CRCB"/>
    <property type="match status" value="1"/>
</dbReference>
<sequence>MSGMGFLAVGVGAALGAWLRWALAILLNAVNPALPYGTLAANLVGGYLIGVAVGFFDTHAGLPPEWRLLVITGFLGGLTTFSTFSGEVVANILAGDHVIGVLHIVAHLGGSLFLTMLGFWTVRTFS</sequence>
<keyword id="KW-0997">Cell inner membrane</keyword>
<keyword id="KW-1003">Cell membrane</keyword>
<keyword id="KW-0407">Ion channel</keyword>
<keyword id="KW-0406">Ion transport</keyword>
<keyword id="KW-0472">Membrane</keyword>
<keyword id="KW-0479">Metal-binding</keyword>
<keyword id="KW-0915">Sodium</keyword>
<keyword id="KW-0812">Transmembrane</keyword>
<keyword id="KW-1133">Transmembrane helix</keyword>
<keyword id="KW-0813">Transport</keyword>
<proteinExistence type="inferred from homology"/>
<comment type="function">
    <text evidence="1">Fluoride-specific ion channel. Important for reducing fluoride concentration in the cell, thus reducing its toxicity.</text>
</comment>
<comment type="catalytic activity">
    <reaction evidence="1">
        <text>fluoride(in) = fluoride(out)</text>
        <dbReference type="Rhea" id="RHEA:76159"/>
        <dbReference type="ChEBI" id="CHEBI:17051"/>
    </reaction>
    <physiologicalReaction direction="left-to-right" evidence="1">
        <dbReference type="Rhea" id="RHEA:76160"/>
    </physiologicalReaction>
</comment>
<comment type="activity regulation">
    <text evidence="1">Na(+) is not transported, but it plays an essential structural role and its presence is essential for fluoride channel function.</text>
</comment>
<comment type="subcellular location">
    <subcellularLocation>
        <location evidence="1">Cell inner membrane</location>
        <topology evidence="1">Multi-pass membrane protein</topology>
    </subcellularLocation>
</comment>
<comment type="similarity">
    <text evidence="1">Belongs to the fluoride channel Fluc/FEX (TC 1.A.43) family.</text>
</comment>
<name>FLUC_RALPJ</name>
<reference key="1">
    <citation type="submission" date="2008-05" db="EMBL/GenBank/DDBJ databases">
        <title>Complete sequence of chromosome 1 of Ralstonia pickettii 12J.</title>
        <authorList>
            <person name="Lucas S."/>
            <person name="Copeland A."/>
            <person name="Lapidus A."/>
            <person name="Glavina del Rio T."/>
            <person name="Dalin E."/>
            <person name="Tice H."/>
            <person name="Bruce D."/>
            <person name="Goodwin L."/>
            <person name="Pitluck S."/>
            <person name="Meincke L."/>
            <person name="Brettin T."/>
            <person name="Detter J.C."/>
            <person name="Han C."/>
            <person name="Kuske C.R."/>
            <person name="Schmutz J."/>
            <person name="Larimer F."/>
            <person name="Land M."/>
            <person name="Hauser L."/>
            <person name="Kyrpides N."/>
            <person name="Mikhailova N."/>
            <person name="Marsh T."/>
            <person name="Richardson P."/>
        </authorList>
    </citation>
    <scope>NUCLEOTIDE SEQUENCE [LARGE SCALE GENOMIC DNA]</scope>
    <source>
        <strain>12J</strain>
    </source>
</reference>
<feature type="chain" id="PRO_1000125147" description="Fluoride-specific ion channel FluC">
    <location>
        <begin position="1"/>
        <end position="126"/>
    </location>
</feature>
<feature type="transmembrane region" description="Helical" evidence="1">
    <location>
        <begin position="6"/>
        <end position="26"/>
    </location>
</feature>
<feature type="transmembrane region" description="Helical" evidence="1">
    <location>
        <begin position="36"/>
        <end position="56"/>
    </location>
</feature>
<feature type="transmembrane region" description="Helical" evidence="1">
    <location>
        <begin position="69"/>
        <end position="89"/>
    </location>
</feature>
<feature type="transmembrane region" description="Helical" evidence="1">
    <location>
        <begin position="99"/>
        <end position="119"/>
    </location>
</feature>
<feature type="binding site" evidence="1">
    <location>
        <position position="76"/>
    </location>
    <ligand>
        <name>Na(+)</name>
        <dbReference type="ChEBI" id="CHEBI:29101"/>
        <note>structural</note>
    </ligand>
</feature>
<feature type="binding site" evidence="1">
    <location>
        <position position="79"/>
    </location>
    <ligand>
        <name>Na(+)</name>
        <dbReference type="ChEBI" id="CHEBI:29101"/>
        <note>structural</note>
    </ligand>
</feature>
<organism>
    <name type="scientific">Ralstonia pickettii (strain 12J)</name>
    <dbReference type="NCBI Taxonomy" id="402626"/>
    <lineage>
        <taxon>Bacteria</taxon>
        <taxon>Pseudomonadati</taxon>
        <taxon>Pseudomonadota</taxon>
        <taxon>Betaproteobacteria</taxon>
        <taxon>Burkholderiales</taxon>
        <taxon>Burkholderiaceae</taxon>
        <taxon>Ralstonia</taxon>
    </lineage>
</organism>
<gene>
    <name evidence="1" type="primary">fluC</name>
    <name evidence="1" type="synonym">crcB</name>
    <name type="ordered locus">Rpic_1208</name>
</gene>